<accession>F1MIW6</accession>
<accession>Q2YDK2</accession>
<protein>
    <recommendedName>
        <fullName evidence="2">Uncharacterized protein C21orf140 homolog</fullName>
    </recommendedName>
    <alternativeName>
        <fullName evidence="2">Protein FAM243</fullName>
    </alternativeName>
</protein>
<sequence length="251" mass="29281">MPHFAKPLLRNIITRNLFNSIKKKQCLQYLQTLRTLQYDGFTTVYFGETDIPESLVTGEDFSDGYYMPTPTWCVVHAGGSQGWVPWKYRMFLRDELCIKQEDNLFFEFCDVVKKAYGKCAIVVKERRRQDATRPKEGKETEAQAHVPSVVNLTSVTCCPEVAKSYGHKLLTLPSPYNYLNPLDSAWSSLKWFIINNRKEFCLQSVDGVYSYQYILFSDLISKGIERINLSKWRTITTKVRRWENYYLGKLS</sequence>
<gene>
    <name evidence="1" type="primary">FAM243</name>
</gene>
<reference key="1">
    <citation type="journal article" date="2009" name="Genome Biol.">
        <title>A whole-genome assembly of the domestic cow, Bos taurus.</title>
        <authorList>
            <person name="Zimin A.V."/>
            <person name="Delcher A.L."/>
            <person name="Florea L."/>
            <person name="Kelley D.R."/>
            <person name="Schatz M.C."/>
            <person name="Puiu D."/>
            <person name="Hanrahan F."/>
            <person name="Pertea G."/>
            <person name="Van Tassell C.P."/>
            <person name="Sonstegard T.S."/>
            <person name="Marcais G."/>
            <person name="Roberts M."/>
            <person name="Subramanian P."/>
            <person name="Yorke J.A."/>
            <person name="Salzberg S.L."/>
        </authorList>
    </citation>
    <scope>NUCLEOTIDE SEQUENCE [LARGE SCALE GENOMIC DNA]</scope>
    <source>
        <strain>Hereford</strain>
    </source>
</reference>
<reference key="2">
    <citation type="submission" date="2005-11" db="EMBL/GenBank/DDBJ databases">
        <authorList>
            <consortium name="NIH - Mammalian Gene Collection (MGC) project"/>
        </authorList>
    </citation>
    <scope>NUCLEOTIDE SEQUENCE [LARGE SCALE MRNA]</scope>
    <source>
        <strain>Crossbred X Angus</strain>
        <tissue>Liver</tissue>
    </source>
</reference>
<evidence type="ECO:0000250" key="1">
    <source>
        <dbReference type="UniProtKB" id="Q8CDS7"/>
    </source>
</evidence>
<evidence type="ECO:0000305" key="2"/>
<comment type="similarity">
    <text evidence="2">Belongs to the FAM243 family.</text>
</comment>
<organism>
    <name type="scientific">Bos taurus</name>
    <name type="common">Bovine</name>
    <dbReference type="NCBI Taxonomy" id="9913"/>
    <lineage>
        <taxon>Eukaryota</taxon>
        <taxon>Metazoa</taxon>
        <taxon>Chordata</taxon>
        <taxon>Craniata</taxon>
        <taxon>Vertebrata</taxon>
        <taxon>Euteleostomi</taxon>
        <taxon>Mammalia</taxon>
        <taxon>Eutheria</taxon>
        <taxon>Laurasiatheria</taxon>
        <taxon>Artiodactyla</taxon>
        <taxon>Ruminantia</taxon>
        <taxon>Pecora</taxon>
        <taxon>Bovidae</taxon>
        <taxon>Bovinae</taxon>
        <taxon>Bos</taxon>
    </lineage>
</organism>
<keyword id="KW-1185">Reference proteome</keyword>
<dbReference type="EMBL" id="DAAA02000013">
    <property type="status" value="NOT_ANNOTATED_CDS"/>
    <property type="molecule type" value="Genomic_DNA"/>
</dbReference>
<dbReference type="EMBL" id="BC110185">
    <property type="protein sequence ID" value="AAI10186.1"/>
    <property type="molecule type" value="mRNA"/>
</dbReference>
<dbReference type="RefSeq" id="NP_001070592.1">
    <property type="nucleotide sequence ID" value="NM_001077124.2"/>
</dbReference>
<dbReference type="PaxDb" id="9913-ENSBTAP00000018387"/>
<dbReference type="Ensembl" id="ENSBTAT00000018387.3">
    <property type="protein sequence ID" value="ENSBTAP00000018387.2"/>
    <property type="gene ID" value="ENSBTAG00000013841.3"/>
</dbReference>
<dbReference type="GeneID" id="768067"/>
<dbReference type="KEGG" id="bta:768067"/>
<dbReference type="CTD" id="101928147"/>
<dbReference type="VEuPathDB" id="HostDB:ENSBTAG00000013841"/>
<dbReference type="VGNC" id="VGNC:56217">
    <property type="gene designation" value="C21orf140"/>
</dbReference>
<dbReference type="eggNOG" id="ENOG502RXAQ">
    <property type="taxonomic scope" value="Eukaryota"/>
</dbReference>
<dbReference type="GeneTree" id="ENSGT00390000010669"/>
<dbReference type="HOGENOM" id="CLU_1106831_0_0_1"/>
<dbReference type="InParanoid" id="F1MIW6"/>
<dbReference type="OMA" id="CIVHAGG"/>
<dbReference type="OrthoDB" id="2266637at2759"/>
<dbReference type="TreeFam" id="TF335469"/>
<dbReference type="Proteomes" id="UP000009136">
    <property type="component" value="Chromosome 1"/>
</dbReference>
<dbReference type="Bgee" id="ENSBTAG00000013841">
    <property type="expression patterns" value="Expressed in semen and 17 other cell types or tissues"/>
</dbReference>
<dbReference type="InterPro" id="IPR037728">
    <property type="entry name" value="C21orf140-like"/>
</dbReference>
<dbReference type="PANTHER" id="PTHR35969:SF1">
    <property type="entry name" value="FAMILY WITH SEQUENCE SIMILARITY 243 MEMBER A"/>
    <property type="match status" value="1"/>
</dbReference>
<dbReference type="PANTHER" id="PTHR35969">
    <property type="entry name" value="PROTEIN FAM243A-RELATED"/>
    <property type="match status" value="1"/>
</dbReference>
<proteinExistence type="evidence at transcript level"/>
<name>FA243_BOVIN</name>
<feature type="chain" id="PRO_0000415165" description="Uncharacterized protein C21orf140 homolog">
    <location>
        <begin position="1"/>
        <end position="251"/>
    </location>
</feature>
<feature type="sequence conflict" description="In Ref. 2; AAI10186." evidence="2" ref="2">
    <original>A</original>
    <variation>E</variation>
    <location>
        <position position="131"/>
    </location>
</feature>
<feature type="sequence conflict" description="In Ref. 2; AAI10186." evidence="2" ref="2">
    <original>F</original>
    <variation>I</variation>
    <location>
        <position position="200"/>
    </location>
</feature>